<organism>
    <name type="scientific">Clostridium acetobutylicum (strain ATCC 824 / DSM 792 / JCM 1419 / IAM 19013 / LMG 5710 / NBRC 13948 / NRRL B-527 / VKM B-1787 / 2291 / W)</name>
    <dbReference type="NCBI Taxonomy" id="272562"/>
    <lineage>
        <taxon>Bacteria</taxon>
        <taxon>Bacillati</taxon>
        <taxon>Bacillota</taxon>
        <taxon>Clostridia</taxon>
        <taxon>Eubacteriales</taxon>
        <taxon>Clostridiaceae</taxon>
        <taxon>Clostridium</taxon>
    </lineage>
</organism>
<evidence type="ECO:0000255" key="1">
    <source>
        <dbReference type="HAMAP-Rule" id="MF_00183"/>
    </source>
</evidence>
<keyword id="KW-0414">Isoprene biosynthesis</keyword>
<keyword id="KW-0464">Manganese</keyword>
<keyword id="KW-0479">Metal-binding</keyword>
<keyword id="KW-0521">NADP</keyword>
<keyword id="KW-0560">Oxidoreductase</keyword>
<keyword id="KW-1185">Reference proteome</keyword>
<gene>
    <name evidence="1" type="primary">dxr</name>
    <name type="ordered locus">CA_C1795</name>
</gene>
<comment type="function">
    <text evidence="1">Catalyzes the NADPH-dependent rearrangement and reduction of 1-deoxy-D-xylulose-5-phosphate (DXP) to 2-C-methyl-D-erythritol 4-phosphate (MEP).</text>
</comment>
<comment type="catalytic activity">
    <reaction evidence="1">
        <text>2-C-methyl-D-erythritol 4-phosphate + NADP(+) = 1-deoxy-D-xylulose 5-phosphate + NADPH + H(+)</text>
        <dbReference type="Rhea" id="RHEA:13717"/>
        <dbReference type="ChEBI" id="CHEBI:15378"/>
        <dbReference type="ChEBI" id="CHEBI:57783"/>
        <dbReference type="ChEBI" id="CHEBI:57792"/>
        <dbReference type="ChEBI" id="CHEBI:58262"/>
        <dbReference type="ChEBI" id="CHEBI:58349"/>
        <dbReference type="EC" id="1.1.1.267"/>
    </reaction>
    <physiologicalReaction direction="right-to-left" evidence="1">
        <dbReference type="Rhea" id="RHEA:13719"/>
    </physiologicalReaction>
</comment>
<comment type="cofactor">
    <cofactor evidence="1">
        <name>Mg(2+)</name>
        <dbReference type="ChEBI" id="CHEBI:18420"/>
    </cofactor>
    <cofactor evidence="1">
        <name>Mn(2+)</name>
        <dbReference type="ChEBI" id="CHEBI:29035"/>
    </cofactor>
</comment>
<comment type="pathway">
    <text evidence="1">Isoprenoid biosynthesis; isopentenyl diphosphate biosynthesis via DXP pathway; isopentenyl diphosphate from 1-deoxy-D-xylulose 5-phosphate: step 1/6.</text>
</comment>
<comment type="similarity">
    <text evidence="1">Belongs to the DXR family.</text>
</comment>
<sequence>MKNISILGATGSIGTQTLDVIRNDSEAFKLLAVSAHSNFKKMIEIIDEFKPELVVMVDKLAYNKVLDYCCEKKLKTSVKVGYEAFNEVASYKDSNIVVTSIVGMIGLIPTLEAIKAGKDIALANKETLVVAGELVTKEAKKYGVNILPVDSEHGAIFQCLQGNKYKDINKILLTASGGPFRGKSFDELNNVTLNDALNHPKWTMGRKITIDSATLMNKGLEVIEAHWLFNVDYEKIQVLVHPQSIVHSMVQYKDGSVIAQLGPTDMRLPIQYALNYPVRKERIVEPVDFYSTPDLHFEKPDMDTFRCLRLAYDAGMAGGIMPAILNSANEYAVDLFLKDKIKFTNIQEIIEDALNHFENVNNLTANTIINKSNEVTKYLKGKIGF</sequence>
<proteinExistence type="inferred from homology"/>
<name>DXR_CLOAB</name>
<dbReference type="EC" id="1.1.1.267" evidence="1"/>
<dbReference type="EMBL" id="AE001437">
    <property type="protein sequence ID" value="AAK79760.1"/>
    <property type="molecule type" value="Genomic_DNA"/>
</dbReference>
<dbReference type="PIR" id="E97121">
    <property type="entry name" value="E97121"/>
</dbReference>
<dbReference type="RefSeq" id="NP_348420.1">
    <property type="nucleotide sequence ID" value="NC_003030.1"/>
</dbReference>
<dbReference type="RefSeq" id="WP_010965101.1">
    <property type="nucleotide sequence ID" value="NC_003030.1"/>
</dbReference>
<dbReference type="SMR" id="Q97I58"/>
<dbReference type="STRING" id="272562.CA_C1795"/>
<dbReference type="GeneID" id="44998289"/>
<dbReference type="KEGG" id="cac:CA_C1795"/>
<dbReference type="PATRIC" id="fig|272562.8.peg.2001"/>
<dbReference type="eggNOG" id="COG0743">
    <property type="taxonomic scope" value="Bacteria"/>
</dbReference>
<dbReference type="HOGENOM" id="CLU_035714_0_1_9"/>
<dbReference type="OrthoDB" id="9806546at2"/>
<dbReference type="UniPathway" id="UPA00056">
    <property type="reaction ID" value="UER00092"/>
</dbReference>
<dbReference type="Proteomes" id="UP000000814">
    <property type="component" value="Chromosome"/>
</dbReference>
<dbReference type="GO" id="GO:0030604">
    <property type="term" value="F:1-deoxy-D-xylulose-5-phosphate reductoisomerase activity"/>
    <property type="evidence" value="ECO:0007669"/>
    <property type="project" value="UniProtKB-UniRule"/>
</dbReference>
<dbReference type="GO" id="GO:0030145">
    <property type="term" value="F:manganese ion binding"/>
    <property type="evidence" value="ECO:0007669"/>
    <property type="project" value="TreeGrafter"/>
</dbReference>
<dbReference type="GO" id="GO:0070402">
    <property type="term" value="F:NADPH binding"/>
    <property type="evidence" value="ECO:0007669"/>
    <property type="project" value="InterPro"/>
</dbReference>
<dbReference type="GO" id="GO:0051484">
    <property type="term" value="P:isopentenyl diphosphate biosynthetic process, methylerythritol 4-phosphate pathway involved in terpenoid biosynthetic process"/>
    <property type="evidence" value="ECO:0007669"/>
    <property type="project" value="TreeGrafter"/>
</dbReference>
<dbReference type="FunFam" id="3.40.50.720:FF:000045">
    <property type="entry name" value="1-deoxy-D-xylulose 5-phosphate reductoisomerase"/>
    <property type="match status" value="1"/>
</dbReference>
<dbReference type="Gene3D" id="1.10.1740.10">
    <property type="match status" value="1"/>
</dbReference>
<dbReference type="Gene3D" id="3.40.50.720">
    <property type="entry name" value="NAD(P)-binding Rossmann-like Domain"/>
    <property type="match status" value="1"/>
</dbReference>
<dbReference type="HAMAP" id="MF_00183">
    <property type="entry name" value="DXP_reductoisom"/>
    <property type="match status" value="1"/>
</dbReference>
<dbReference type="InterPro" id="IPR003821">
    <property type="entry name" value="DXP_reductoisomerase"/>
</dbReference>
<dbReference type="InterPro" id="IPR013644">
    <property type="entry name" value="DXP_reductoisomerase_C"/>
</dbReference>
<dbReference type="InterPro" id="IPR013512">
    <property type="entry name" value="DXP_reductoisomerase_N"/>
</dbReference>
<dbReference type="InterPro" id="IPR026877">
    <property type="entry name" value="DXPR_C"/>
</dbReference>
<dbReference type="InterPro" id="IPR036169">
    <property type="entry name" value="DXPR_C_sf"/>
</dbReference>
<dbReference type="InterPro" id="IPR036291">
    <property type="entry name" value="NAD(P)-bd_dom_sf"/>
</dbReference>
<dbReference type="NCBIfam" id="TIGR00243">
    <property type="entry name" value="Dxr"/>
    <property type="match status" value="1"/>
</dbReference>
<dbReference type="NCBIfam" id="NF009114">
    <property type="entry name" value="PRK12464.1"/>
    <property type="match status" value="1"/>
</dbReference>
<dbReference type="PANTHER" id="PTHR30525">
    <property type="entry name" value="1-DEOXY-D-XYLULOSE 5-PHOSPHATE REDUCTOISOMERASE"/>
    <property type="match status" value="1"/>
</dbReference>
<dbReference type="PANTHER" id="PTHR30525:SF0">
    <property type="entry name" value="1-DEOXY-D-XYLULOSE 5-PHOSPHATE REDUCTOISOMERASE, CHLOROPLASTIC"/>
    <property type="match status" value="1"/>
</dbReference>
<dbReference type="Pfam" id="PF08436">
    <property type="entry name" value="DXP_redisom_C"/>
    <property type="match status" value="1"/>
</dbReference>
<dbReference type="Pfam" id="PF02670">
    <property type="entry name" value="DXP_reductoisom"/>
    <property type="match status" value="1"/>
</dbReference>
<dbReference type="Pfam" id="PF13288">
    <property type="entry name" value="DXPR_C"/>
    <property type="match status" value="1"/>
</dbReference>
<dbReference type="PIRSF" id="PIRSF006205">
    <property type="entry name" value="Dxp_reductismrs"/>
    <property type="match status" value="1"/>
</dbReference>
<dbReference type="SUPFAM" id="SSF69055">
    <property type="entry name" value="1-deoxy-D-xylulose-5-phosphate reductoisomerase, C-terminal domain"/>
    <property type="match status" value="1"/>
</dbReference>
<dbReference type="SUPFAM" id="SSF55347">
    <property type="entry name" value="Glyceraldehyde-3-phosphate dehydrogenase-like, C-terminal domain"/>
    <property type="match status" value="1"/>
</dbReference>
<dbReference type="SUPFAM" id="SSF51735">
    <property type="entry name" value="NAD(P)-binding Rossmann-fold domains"/>
    <property type="match status" value="1"/>
</dbReference>
<accession>Q97I58</accession>
<protein>
    <recommendedName>
        <fullName evidence="1">1-deoxy-D-xylulose 5-phosphate reductoisomerase</fullName>
        <shortName evidence="1">DXP reductoisomerase</shortName>
        <ecNumber evidence="1">1.1.1.267</ecNumber>
    </recommendedName>
    <alternativeName>
        <fullName evidence="1">1-deoxyxylulose-5-phosphate reductoisomerase</fullName>
    </alternativeName>
    <alternativeName>
        <fullName evidence="1">2-C-methyl-D-erythritol 4-phosphate synthase</fullName>
    </alternativeName>
</protein>
<feature type="chain" id="PRO_0000163636" description="1-deoxy-D-xylulose 5-phosphate reductoisomerase">
    <location>
        <begin position="1"/>
        <end position="385"/>
    </location>
</feature>
<feature type="binding site" evidence="1">
    <location>
        <position position="10"/>
    </location>
    <ligand>
        <name>NADPH</name>
        <dbReference type="ChEBI" id="CHEBI:57783"/>
    </ligand>
</feature>
<feature type="binding site" evidence="1">
    <location>
        <position position="11"/>
    </location>
    <ligand>
        <name>NADPH</name>
        <dbReference type="ChEBI" id="CHEBI:57783"/>
    </ligand>
</feature>
<feature type="binding site" evidence="1">
    <location>
        <position position="12"/>
    </location>
    <ligand>
        <name>NADPH</name>
        <dbReference type="ChEBI" id="CHEBI:57783"/>
    </ligand>
</feature>
<feature type="binding site" evidence="1">
    <location>
        <position position="13"/>
    </location>
    <ligand>
        <name>NADPH</name>
        <dbReference type="ChEBI" id="CHEBI:57783"/>
    </ligand>
</feature>
<feature type="binding site" evidence="1">
    <location>
        <position position="38"/>
    </location>
    <ligand>
        <name>NADPH</name>
        <dbReference type="ChEBI" id="CHEBI:57783"/>
    </ligand>
</feature>
<feature type="binding site" evidence="1">
    <location>
        <position position="124"/>
    </location>
    <ligand>
        <name>NADPH</name>
        <dbReference type="ChEBI" id="CHEBI:57783"/>
    </ligand>
</feature>
<feature type="binding site" evidence="1">
    <location>
        <position position="125"/>
    </location>
    <ligand>
        <name>1-deoxy-D-xylulose 5-phosphate</name>
        <dbReference type="ChEBI" id="CHEBI:57792"/>
    </ligand>
</feature>
<feature type="binding site" evidence="1">
    <location>
        <position position="126"/>
    </location>
    <ligand>
        <name>NADPH</name>
        <dbReference type="ChEBI" id="CHEBI:57783"/>
    </ligand>
</feature>
<feature type="binding site" evidence="1">
    <location>
        <position position="150"/>
    </location>
    <ligand>
        <name>Mn(2+)</name>
        <dbReference type="ChEBI" id="CHEBI:29035"/>
    </ligand>
</feature>
<feature type="binding site" evidence="1">
    <location>
        <position position="151"/>
    </location>
    <ligand>
        <name>1-deoxy-D-xylulose 5-phosphate</name>
        <dbReference type="ChEBI" id="CHEBI:57792"/>
    </ligand>
</feature>
<feature type="binding site" evidence="1">
    <location>
        <position position="152"/>
    </location>
    <ligand>
        <name>1-deoxy-D-xylulose 5-phosphate</name>
        <dbReference type="ChEBI" id="CHEBI:57792"/>
    </ligand>
</feature>
<feature type="binding site" evidence="1">
    <location>
        <position position="152"/>
    </location>
    <ligand>
        <name>Mn(2+)</name>
        <dbReference type="ChEBI" id="CHEBI:29035"/>
    </ligand>
</feature>
<feature type="binding site" evidence="1">
    <location>
        <position position="176"/>
    </location>
    <ligand>
        <name>1-deoxy-D-xylulose 5-phosphate</name>
        <dbReference type="ChEBI" id="CHEBI:57792"/>
    </ligand>
</feature>
<feature type="binding site" evidence="1">
    <location>
        <position position="199"/>
    </location>
    <ligand>
        <name>1-deoxy-D-xylulose 5-phosphate</name>
        <dbReference type="ChEBI" id="CHEBI:57792"/>
    </ligand>
</feature>
<feature type="binding site" evidence="1">
    <location>
        <position position="205"/>
    </location>
    <ligand>
        <name>NADPH</name>
        <dbReference type="ChEBI" id="CHEBI:57783"/>
    </ligand>
</feature>
<feature type="binding site" evidence="1">
    <location>
        <position position="212"/>
    </location>
    <ligand>
        <name>1-deoxy-D-xylulose 5-phosphate</name>
        <dbReference type="ChEBI" id="CHEBI:57792"/>
    </ligand>
</feature>
<feature type="binding site" evidence="1">
    <location>
        <position position="217"/>
    </location>
    <ligand>
        <name>1-deoxy-D-xylulose 5-phosphate</name>
        <dbReference type="ChEBI" id="CHEBI:57792"/>
    </ligand>
</feature>
<feature type="binding site" evidence="1">
    <location>
        <position position="218"/>
    </location>
    <ligand>
        <name>1-deoxy-D-xylulose 5-phosphate</name>
        <dbReference type="ChEBI" id="CHEBI:57792"/>
    </ligand>
</feature>
<feature type="binding site" evidence="1">
    <location>
        <position position="221"/>
    </location>
    <ligand>
        <name>1-deoxy-D-xylulose 5-phosphate</name>
        <dbReference type="ChEBI" id="CHEBI:57792"/>
    </ligand>
</feature>
<feature type="binding site" evidence="1">
    <location>
        <position position="221"/>
    </location>
    <ligand>
        <name>Mn(2+)</name>
        <dbReference type="ChEBI" id="CHEBI:29035"/>
    </ligand>
</feature>
<reference key="1">
    <citation type="journal article" date="2001" name="J. Bacteriol.">
        <title>Genome sequence and comparative analysis of the solvent-producing bacterium Clostridium acetobutylicum.</title>
        <authorList>
            <person name="Noelling J."/>
            <person name="Breton G."/>
            <person name="Omelchenko M.V."/>
            <person name="Makarova K.S."/>
            <person name="Zeng Q."/>
            <person name="Gibson R."/>
            <person name="Lee H.M."/>
            <person name="Dubois J."/>
            <person name="Qiu D."/>
            <person name="Hitti J."/>
            <person name="Wolf Y.I."/>
            <person name="Tatusov R.L."/>
            <person name="Sabathe F."/>
            <person name="Doucette-Stamm L.A."/>
            <person name="Soucaille P."/>
            <person name="Daly M.J."/>
            <person name="Bennett G.N."/>
            <person name="Koonin E.V."/>
            <person name="Smith D.R."/>
        </authorList>
    </citation>
    <scope>NUCLEOTIDE SEQUENCE [LARGE SCALE GENOMIC DNA]</scope>
    <source>
        <strain>ATCC 824 / DSM 792 / JCM 1419 / IAM 19013 / LMG 5710 / NBRC 13948 / NRRL B-527 / VKM B-1787 / 2291 / W</strain>
    </source>
</reference>